<accession>A7H101</accession>
<feature type="chain" id="PRO_0000355650" description="Large ribosomal subunit protein uL24">
    <location>
        <begin position="1"/>
        <end position="78"/>
    </location>
</feature>
<sequence length="78" mass="8376">MANVKFQVKKGDLVKIIAGDDKGKTGKILSVLAKKSQVIVEGCKVAKKAIKPSEKIPNGGHINKEMPIHISNVAKVEE</sequence>
<keyword id="KW-1185">Reference proteome</keyword>
<keyword id="KW-0687">Ribonucleoprotein</keyword>
<keyword id="KW-0689">Ribosomal protein</keyword>
<keyword id="KW-0694">RNA-binding</keyword>
<keyword id="KW-0699">rRNA-binding</keyword>
<gene>
    <name evidence="1" type="primary">rplX</name>
    <name type="ordered locus">Ccur92_18390</name>
    <name type="ORF">CCV52592_1022</name>
</gene>
<proteinExistence type="inferred from homology"/>
<name>RL24_CAMC5</name>
<protein>
    <recommendedName>
        <fullName evidence="1">Large ribosomal subunit protein uL24</fullName>
    </recommendedName>
    <alternativeName>
        <fullName evidence="2">50S ribosomal protein L24</fullName>
    </alternativeName>
</protein>
<organism>
    <name type="scientific">Campylobacter curvus (strain 525.92)</name>
    <dbReference type="NCBI Taxonomy" id="360105"/>
    <lineage>
        <taxon>Bacteria</taxon>
        <taxon>Pseudomonadati</taxon>
        <taxon>Campylobacterota</taxon>
        <taxon>Epsilonproteobacteria</taxon>
        <taxon>Campylobacterales</taxon>
        <taxon>Campylobacteraceae</taxon>
        <taxon>Campylobacter</taxon>
    </lineage>
</organism>
<dbReference type="EMBL" id="CP000767">
    <property type="protein sequence ID" value="EAT99609.1"/>
    <property type="molecule type" value="Genomic_DNA"/>
</dbReference>
<dbReference type="RefSeq" id="WP_009649611.1">
    <property type="nucleotide sequence ID" value="NC_009715.2"/>
</dbReference>
<dbReference type="SMR" id="A7H101"/>
<dbReference type="STRING" id="360105.CCV52592_1022"/>
<dbReference type="KEGG" id="ccv:CCV52592_1022"/>
<dbReference type="HOGENOM" id="CLU_093315_3_0_7"/>
<dbReference type="OrthoDB" id="9807419at2"/>
<dbReference type="Proteomes" id="UP000006380">
    <property type="component" value="Chromosome"/>
</dbReference>
<dbReference type="GO" id="GO:1990904">
    <property type="term" value="C:ribonucleoprotein complex"/>
    <property type="evidence" value="ECO:0007669"/>
    <property type="project" value="UniProtKB-KW"/>
</dbReference>
<dbReference type="GO" id="GO:0005840">
    <property type="term" value="C:ribosome"/>
    <property type="evidence" value="ECO:0007669"/>
    <property type="project" value="UniProtKB-KW"/>
</dbReference>
<dbReference type="GO" id="GO:0019843">
    <property type="term" value="F:rRNA binding"/>
    <property type="evidence" value="ECO:0007669"/>
    <property type="project" value="UniProtKB-UniRule"/>
</dbReference>
<dbReference type="GO" id="GO:0003735">
    <property type="term" value="F:structural constituent of ribosome"/>
    <property type="evidence" value="ECO:0007669"/>
    <property type="project" value="InterPro"/>
</dbReference>
<dbReference type="GO" id="GO:0006412">
    <property type="term" value="P:translation"/>
    <property type="evidence" value="ECO:0007669"/>
    <property type="project" value="UniProtKB-UniRule"/>
</dbReference>
<dbReference type="CDD" id="cd06089">
    <property type="entry name" value="KOW_RPL26"/>
    <property type="match status" value="1"/>
</dbReference>
<dbReference type="Gene3D" id="2.30.30.30">
    <property type="match status" value="1"/>
</dbReference>
<dbReference type="HAMAP" id="MF_01326_B">
    <property type="entry name" value="Ribosomal_uL24_B"/>
    <property type="match status" value="1"/>
</dbReference>
<dbReference type="InterPro" id="IPR005824">
    <property type="entry name" value="KOW"/>
</dbReference>
<dbReference type="InterPro" id="IPR014722">
    <property type="entry name" value="Rib_uL2_dom2"/>
</dbReference>
<dbReference type="InterPro" id="IPR003256">
    <property type="entry name" value="Ribosomal_uL24"/>
</dbReference>
<dbReference type="InterPro" id="IPR005825">
    <property type="entry name" value="Ribosomal_uL24_CS"/>
</dbReference>
<dbReference type="InterPro" id="IPR041988">
    <property type="entry name" value="Ribosomal_uL24_KOW"/>
</dbReference>
<dbReference type="InterPro" id="IPR008991">
    <property type="entry name" value="Translation_prot_SH3-like_sf"/>
</dbReference>
<dbReference type="NCBIfam" id="TIGR01079">
    <property type="entry name" value="rplX_bact"/>
    <property type="match status" value="1"/>
</dbReference>
<dbReference type="PANTHER" id="PTHR12903">
    <property type="entry name" value="MITOCHONDRIAL RIBOSOMAL PROTEIN L24"/>
    <property type="match status" value="1"/>
</dbReference>
<dbReference type="Pfam" id="PF00467">
    <property type="entry name" value="KOW"/>
    <property type="match status" value="1"/>
</dbReference>
<dbReference type="Pfam" id="PF17136">
    <property type="entry name" value="ribosomal_L24"/>
    <property type="match status" value="1"/>
</dbReference>
<dbReference type="SMART" id="SM00739">
    <property type="entry name" value="KOW"/>
    <property type="match status" value="1"/>
</dbReference>
<dbReference type="SUPFAM" id="SSF50104">
    <property type="entry name" value="Translation proteins SH3-like domain"/>
    <property type="match status" value="1"/>
</dbReference>
<dbReference type="PROSITE" id="PS01108">
    <property type="entry name" value="RIBOSOMAL_L24"/>
    <property type="match status" value="1"/>
</dbReference>
<evidence type="ECO:0000255" key="1">
    <source>
        <dbReference type="HAMAP-Rule" id="MF_01326"/>
    </source>
</evidence>
<evidence type="ECO:0000305" key="2"/>
<reference key="1">
    <citation type="submission" date="2007-07" db="EMBL/GenBank/DDBJ databases">
        <title>Genome sequence of Campylobacter curvus 525.92 isolated from human feces.</title>
        <authorList>
            <person name="Fouts D.E."/>
            <person name="Mongodin E.F."/>
            <person name="Puiu D."/>
            <person name="Sebastian Y."/>
            <person name="Miller W.G."/>
            <person name="Mandrell R.E."/>
            <person name="Lastovica A.J."/>
            <person name="Nelson K.E."/>
        </authorList>
    </citation>
    <scope>NUCLEOTIDE SEQUENCE [LARGE SCALE GENOMIC DNA]</scope>
    <source>
        <strain>525.92</strain>
    </source>
</reference>
<comment type="function">
    <text evidence="1">One of two assembly initiator proteins, it binds directly to the 5'-end of the 23S rRNA, where it nucleates assembly of the 50S subunit.</text>
</comment>
<comment type="function">
    <text evidence="1">One of the proteins that surrounds the polypeptide exit tunnel on the outside of the subunit.</text>
</comment>
<comment type="subunit">
    <text evidence="1">Part of the 50S ribosomal subunit.</text>
</comment>
<comment type="similarity">
    <text evidence="1">Belongs to the universal ribosomal protein uL24 family.</text>
</comment>